<dbReference type="EC" id="6.3.1.21" evidence="1"/>
<dbReference type="EMBL" id="CU458896">
    <property type="protein sequence ID" value="CAM61279.1"/>
    <property type="molecule type" value="Genomic_DNA"/>
</dbReference>
<dbReference type="RefSeq" id="WP_005084255.1">
    <property type="nucleotide sequence ID" value="NZ_MLCG01000004.1"/>
</dbReference>
<dbReference type="SMR" id="B1MKI7"/>
<dbReference type="GeneID" id="93378141"/>
<dbReference type="KEGG" id="mab:MAB_1191c"/>
<dbReference type="UniPathway" id="UPA00074">
    <property type="reaction ID" value="UER00127"/>
</dbReference>
<dbReference type="Proteomes" id="UP000007137">
    <property type="component" value="Chromosome"/>
</dbReference>
<dbReference type="GO" id="GO:0005829">
    <property type="term" value="C:cytosol"/>
    <property type="evidence" value="ECO:0007669"/>
    <property type="project" value="TreeGrafter"/>
</dbReference>
<dbReference type="GO" id="GO:0005524">
    <property type="term" value="F:ATP binding"/>
    <property type="evidence" value="ECO:0007669"/>
    <property type="project" value="UniProtKB-UniRule"/>
</dbReference>
<dbReference type="GO" id="GO:0000287">
    <property type="term" value="F:magnesium ion binding"/>
    <property type="evidence" value="ECO:0007669"/>
    <property type="project" value="InterPro"/>
</dbReference>
<dbReference type="GO" id="GO:0043815">
    <property type="term" value="F:phosphoribosylglycinamide formyltransferase 2 activity"/>
    <property type="evidence" value="ECO:0007669"/>
    <property type="project" value="UniProtKB-UniRule"/>
</dbReference>
<dbReference type="GO" id="GO:0004644">
    <property type="term" value="F:phosphoribosylglycinamide formyltransferase activity"/>
    <property type="evidence" value="ECO:0007669"/>
    <property type="project" value="InterPro"/>
</dbReference>
<dbReference type="GO" id="GO:0006189">
    <property type="term" value="P:'de novo' IMP biosynthetic process"/>
    <property type="evidence" value="ECO:0007669"/>
    <property type="project" value="UniProtKB-UniRule"/>
</dbReference>
<dbReference type="Gene3D" id="3.40.50.20">
    <property type="match status" value="1"/>
</dbReference>
<dbReference type="Gene3D" id="3.30.1490.20">
    <property type="entry name" value="ATP-grasp fold, A domain"/>
    <property type="match status" value="1"/>
</dbReference>
<dbReference type="Gene3D" id="3.30.470.20">
    <property type="entry name" value="ATP-grasp fold, B domain"/>
    <property type="match status" value="1"/>
</dbReference>
<dbReference type="HAMAP" id="MF_01643">
    <property type="entry name" value="PurT"/>
    <property type="match status" value="1"/>
</dbReference>
<dbReference type="InterPro" id="IPR011761">
    <property type="entry name" value="ATP-grasp"/>
</dbReference>
<dbReference type="InterPro" id="IPR003135">
    <property type="entry name" value="ATP-grasp_carboxylate-amine"/>
</dbReference>
<dbReference type="InterPro" id="IPR013815">
    <property type="entry name" value="ATP_grasp_subdomain_1"/>
</dbReference>
<dbReference type="InterPro" id="IPR016185">
    <property type="entry name" value="PreATP-grasp_dom_sf"/>
</dbReference>
<dbReference type="InterPro" id="IPR005862">
    <property type="entry name" value="PurT"/>
</dbReference>
<dbReference type="InterPro" id="IPR054350">
    <property type="entry name" value="PurT/PurK_preATP-grasp"/>
</dbReference>
<dbReference type="InterPro" id="IPR048740">
    <property type="entry name" value="PurT_C"/>
</dbReference>
<dbReference type="InterPro" id="IPR011054">
    <property type="entry name" value="Rudment_hybrid_motif"/>
</dbReference>
<dbReference type="NCBIfam" id="NF006766">
    <property type="entry name" value="PRK09288.1"/>
    <property type="match status" value="1"/>
</dbReference>
<dbReference type="NCBIfam" id="TIGR01142">
    <property type="entry name" value="purT"/>
    <property type="match status" value="1"/>
</dbReference>
<dbReference type="PANTHER" id="PTHR43055">
    <property type="entry name" value="FORMATE-DEPENDENT PHOSPHORIBOSYLGLYCINAMIDE FORMYLTRANSFERASE"/>
    <property type="match status" value="1"/>
</dbReference>
<dbReference type="PANTHER" id="PTHR43055:SF1">
    <property type="entry name" value="FORMATE-DEPENDENT PHOSPHORIBOSYLGLYCINAMIDE FORMYLTRANSFERASE"/>
    <property type="match status" value="1"/>
</dbReference>
<dbReference type="Pfam" id="PF02222">
    <property type="entry name" value="ATP-grasp"/>
    <property type="match status" value="1"/>
</dbReference>
<dbReference type="Pfam" id="PF21244">
    <property type="entry name" value="PurT_C"/>
    <property type="match status" value="1"/>
</dbReference>
<dbReference type="Pfam" id="PF22660">
    <property type="entry name" value="RS_preATP-grasp-like"/>
    <property type="match status" value="1"/>
</dbReference>
<dbReference type="SUPFAM" id="SSF56059">
    <property type="entry name" value="Glutathione synthetase ATP-binding domain-like"/>
    <property type="match status" value="1"/>
</dbReference>
<dbReference type="SUPFAM" id="SSF52440">
    <property type="entry name" value="PreATP-grasp domain"/>
    <property type="match status" value="1"/>
</dbReference>
<dbReference type="SUPFAM" id="SSF51246">
    <property type="entry name" value="Rudiment single hybrid motif"/>
    <property type="match status" value="1"/>
</dbReference>
<dbReference type="PROSITE" id="PS50975">
    <property type="entry name" value="ATP_GRASP"/>
    <property type="match status" value="1"/>
</dbReference>
<proteinExistence type="inferred from homology"/>
<keyword id="KW-0067">ATP-binding</keyword>
<keyword id="KW-0436">Ligase</keyword>
<keyword id="KW-0460">Magnesium</keyword>
<keyword id="KW-0479">Metal-binding</keyword>
<keyword id="KW-0547">Nucleotide-binding</keyword>
<keyword id="KW-0658">Purine biosynthesis</keyword>
<keyword id="KW-1185">Reference proteome</keyword>
<accession>B1MKI7</accession>
<sequence length="402" mass="43386">MTTIGTPLSPRATRVMLLGSGELGREVLIALQRLGVETIAVDRYENAPGHQIAHHARVISMTDPEQLRALIEAEKPDLVVPEIEAIATATLEALETEGVVRVIPTARAARLTMDREGIRRLAAETLGLPTSPYQFCGSLDELQAAIDPESGGVGYPCVVKPLMSSSGKGQSKLDGPADVEKAWDYAMAGSRVTNNRVIVEGFVDFDYEITLLTVRALGDDGEVETSFCAPIGHRQANGDYVESWQPHPMTEAALRSAQHIARSVTENLGGQGIFGVELFIKGDQVYFSEVSPRPHDTGMVTMITQWQNEFELHARAILGLPVDTTLKSAGASAVIYGGVEAQGVVFDGVDEALRVPRTELRLFGKPESFITRRMGVALARDEDVDTARRNAAEAAGRVRVSG</sequence>
<feature type="chain" id="PRO_1000186884" description="Formate-dependent phosphoribosylglycinamide formyltransferase">
    <location>
        <begin position="1"/>
        <end position="402"/>
    </location>
</feature>
<feature type="domain" description="ATP-grasp" evidence="1">
    <location>
        <begin position="120"/>
        <end position="318"/>
    </location>
</feature>
<feature type="binding site" evidence="1">
    <location>
        <begin position="22"/>
        <end position="23"/>
    </location>
    <ligand>
        <name>N(1)-(5-phospho-beta-D-ribosyl)glycinamide</name>
        <dbReference type="ChEBI" id="CHEBI:143788"/>
    </ligand>
</feature>
<feature type="binding site" evidence="1">
    <location>
        <position position="82"/>
    </location>
    <ligand>
        <name>N(1)-(5-phospho-beta-D-ribosyl)glycinamide</name>
        <dbReference type="ChEBI" id="CHEBI:143788"/>
    </ligand>
</feature>
<feature type="binding site" evidence="1">
    <location>
        <position position="115"/>
    </location>
    <ligand>
        <name>ATP</name>
        <dbReference type="ChEBI" id="CHEBI:30616"/>
    </ligand>
</feature>
<feature type="binding site" evidence="1">
    <location>
        <position position="160"/>
    </location>
    <ligand>
        <name>ATP</name>
        <dbReference type="ChEBI" id="CHEBI:30616"/>
    </ligand>
</feature>
<feature type="binding site" evidence="1">
    <location>
        <begin position="165"/>
        <end position="170"/>
    </location>
    <ligand>
        <name>ATP</name>
        <dbReference type="ChEBI" id="CHEBI:30616"/>
    </ligand>
</feature>
<feature type="binding site" evidence="1">
    <location>
        <begin position="200"/>
        <end position="203"/>
    </location>
    <ligand>
        <name>ATP</name>
        <dbReference type="ChEBI" id="CHEBI:30616"/>
    </ligand>
</feature>
<feature type="binding site" evidence="1">
    <location>
        <position position="208"/>
    </location>
    <ligand>
        <name>ATP</name>
        <dbReference type="ChEBI" id="CHEBI:30616"/>
    </ligand>
</feature>
<feature type="binding site" evidence="1">
    <location>
        <position position="277"/>
    </location>
    <ligand>
        <name>Mg(2+)</name>
        <dbReference type="ChEBI" id="CHEBI:18420"/>
    </ligand>
</feature>
<feature type="binding site" evidence="1">
    <location>
        <position position="289"/>
    </location>
    <ligand>
        <name>Mg(2+)</name>
        <dbReference type="ChEBI" id="CHEBI:18420"/>
    </ligand>
</feature>
<feature type="binding site" evidence="1">
    <location>
        <position position="296"/>
    </location>
    <ligand>
        <name>N(1)-(5-phospho-beta-D-ribosyl)glycinamide</name>
        <dbReference type="ChEBI" id="CHEBI:143788"/>
    </ligand>
</feature>
<feature type="binding site" evidence="1">
    <location>
        <position position="365"/>
    </location>
    <ligand>
        <name>N(1)-(5-phospho-beta-D-ribosyl)glycinamide</name>
        <dbReference type="ChEBI" id="CHEBI:143788"/>
    </ligand>
</feature>
<feature type="binding site" evidence="1">
    <location>
        <begin position="372"/>
        <end position="373"/>
    </location>
    <ligand>
        <name>N(1)-(5-phospho-beta-D-ribosyl)glycinamide</name>
        <dbReference type="ChEBI" id="CHEBI:143788"/>
    </ligand>
</feature>
<protein>
    <recommendedName>
        <fullName evidence="1">Formate-dependent phosphoribosylglycinamide formyltransferase</fullName>
        <ecNumber evidence="1">6.3.1.21</ecNumber>
    </recommendedName>
    <alternativeName>
        <fullName evidence="1">5'-phosphoribosylglycinamide transformylase 2</fullName>
    </alternativeName>
    <alternativeName>
        <fullName evidence="1">Formate-dependent GAR transformylase</fullName>
    </alternativeName>
    <alternativeName>
        <fullName evidence="1">GAR transformylase 2</fullName>
        <shortName evidence="1">GART 2</shortName>
    </alternativeName>
    <alternativeName>
        <fullName evidence="1">Non-folate glycinamide ribonucleotide transformylase</fullName>
    </alternativeName>
    <alternativeName>
        <fullName evidence="1">Phosphoribosylglycinamide formyltransferase 2</fullName>
    </alternativeName>
</protein>
<comment type="function">
    <text evidence="1">Involved in the de novo purine biosynthesis. Catalyzes the transfer of formate to 5-phospho-ribosyl-glycinamide (GAR), producing 5-phospho-ribosyl-N-formylglycinamide (FGAR). Formate is provided by PurU via hydrolysis of 10-formyl-tetrahydrofolate.</text>
</comment>
<comment type="catalytic activity">
    <reaction evidence="1">
        <text>N(1)-(5-phospho-beta-D-ribosyl)glycinamide + formate + ATP = N(2)-formyl-N(1)-(5-phospho-beta-D-ribosyl)glycinamide + ADP + phosphate + H(+)</text>
        <dbReference type="Rhea" id="RHEA:24829"/>
        <dbReference type="ChEBI" id="CHEBI:15378"/>
        <dbReference type="ChEBI" id="CHEBI:15740"/>
        <dbReference type="ChEBI" id="CHEBI:30616"/>
        <dbReference type="ChEBI" id="CHEBI:43474"/>
        <dbReference type="ChEBI" id="CHEBI:143788"/>
        <dbReference type="ChEBI" id="CHEBI:147286"/>
        <dbReference type="ChEBI" id="CHEBI:456216"/>
        <dbReference type="EC" id="6.3.1.21"/>
    </reaction>
    <physiologicalReaction direction="left-to-right" evidence="1">
        <dbReference type="Rhea" id="RHEA:24830"/>
    </physiologicalReaction>
</comment>
<comment type="pathway">
    <text evidence="1">Purine metabolism; IMP biosynthesis via de novo pathway; N(2)-formyl-N(1)-(5-phospho-D-ribosyl)glycinamide from N(1)-(5-phospho-D-ribosyl)glycinamide (formate route): step 1/1.</text>
</comment>
<comment type="subunit">
    <text evidence="1">Homodimer.</text>
</comment>
<comment type="similarity">
    <text evidence="1">Belongs to the PurK/PurT family.</text>
</comment>
<reference key="1">
    <citation type="journal article" date="2009" name="PLoS ONE">
        <title>Non mycobacterial virulence genes in the genome of the emerging pathogen Mycobacterium abscessus.</title>
        <authorList>
            <person name="Ripoll F."/>
            <person name="Pasek S."/>
            <person name="Schenowitz C."/>
            <person name="Dossat C."/>
            <person name="Barbe V."/>
            <person name="Rottman M."/>
            <person name="Macheras E."/>
            <person name="Heym B."/>
            <person name="Herrmann J.L."/>
            <person name="Daffe M."/>
            <person name="Brosch R."/>
            <person name="Risler J.L."/>
            <person name="Gaillard J.L."/>
        </authorList>
    </citation>
    <scope>NUCLEOTIDE SEQUENCE [LARGE SCALE GENOMIC DNA]</scope>
    <source>
        <strain>ATCC 19977 / DSM 44196 / CCUG 20993 / CIP 104536 / JCM 13569 / NCTC 13031 / TMC 1543 / L948</strain>
    </source>
</reference>
<organism>
    <name type="scientific">Mycobacteroides abscessus (strain ATCC 19977 / DSM 44196 / CCUG 20993 / CIP 104536 / JCM 13569 / NCTC 13031 / TMC 1543 / L948)</name>
    <name type="common">Mycobacterium abscessus</name>
    <dbReference type="NCBI Taxonomy" id="561007"/>
    <lineage>
        <taxon>Bacteria</taxon>
        <taxon>Bacillati</taxon>
        <taxon>Actinomycetota</taxon>
        <taxon>Actinomycetes</taxon>
        <taxon>Mycobacteriales</taxon>
        <taxon>Mycobacteriaceae</taxon>
        <taxon>Mycobacteroides</taxon>
        <taxon>Mycobacteroides abscessus</taxon>
    </lineage>
</organism>
<evidence type="ECO:0000255" key="1">
    <source>
        <dbReference type="HAMAP-Rule" id="MF_01643"/>
    </source>
</evidence>
<gene>
    <name evidence="1" type="primary">purT</name>
    <name type="ordered locus">MAB_1191c</name>
</gene>
<name>PURT_MYCA9</name>